<organism>
    <name type="scientific">Shigella boydii serotype 18 (strain CDC 3083-94 / BS512)</name>
    <dbReference type="NCBI Taxonomy" id="344609"/>
    <lineage>
        <taxon>Bacteria</taxon>
        <taxon>Pseudomonadati</taxon>
        <taxon>Pseudomonadota</taxon>
        <taxon>Gammaproteobacteria</taxon>
        <taxon>Enterobacterales</taxon>
        <taxon>Enterobacteriaceae</taxon>
        <taxon>Shigella</taxon>
    </lineage>
</organism>
<name>ARNT_SHIB3</name>
<accession>B2TW40</accession>
<gene>
    <name evidence="1" type="primary">arnT</name>
    <name type="ordered locus">SbBS512_E2633</name>
</gene>
<proteinExistence type="inferred from homology"/>
<evidence type="ECO:0000255" key="1">
    <source>
        <dbReference type="HAMAP-Rule" id="MF_01165"/>
    </source>
</evidence>
<reference key="1">
    <citation type="submission" date="2008-05" db="EMBL/GenBank/DDBJ databases">
        <title>Complete sequence of Shigella boydii serotype 18 strain BS512.</title>
        <authorList>
            <person name="Rasko D.A."/>
            <person name="Rosovitz M."/>
            <person name="Maurelli A.T."/>
            <person name="Myers G."/>
            <person name="Seshadri R."/>
            <person name="Cer R."/>
            <person name="Jiang L."/>
            <person name="Ravel J."/>
            <person name="Sebastian Y."/>
        </authorList>
    </citation>
    <scope>NUCLEOTIDE SEQUENCE [LARGE SCALE GENOMIC DNA]</scope>
    <source>
        <strain>CDC 3083-94 / BS512</strain>
    </source>
</reference>
<keyword id="KW-0997">Cell inner membrane</keyword>
<keyword id="KW-1003">Cell membrane</keyword>
<keyword id="KW-0328">Glycosyltransferase</keyword>
<keyword id="KW-0441">Lipid A biosynthesis</keyword>
<keyword id="KW-0444">Lipid biosynthesis</keyword>
<keyword id="KW-0443">Lipid metabolism</keyword>
<keyword id="KW-0448">Lipopolysaccharide biosynthesis</keyword>
<keyword id="KW-0472">Membrane</keyword>
<keyword id="KW-1185">Reference proteome</keyword>
<keyword id="KW-0808">Transferase</keyword>
<keyword id="KW-0812">Transmembrane</keyword>
<keyword id="KW-1133">Transmembrane helix</keyword>
<sequence>MKSVRYLIGLFAFIACYYLLPISTRLLWQPDETRYAEISREMLASGDWIVPHLLGLRYFEKPIAGYWINSIGQWLFGANNFGVRAGVIFATLLTAALVTWFTLRLWRDKRLALLATVIYLSLFIVYAIGTYAVLDPFIAFWLVAGMCSFWLAMQAQTWKGKSAGFLLLGITCGMGVMTKGFLALAVPVLSVLPWVATQKRWKDLFIYGWLAVISCVLTVLPWGLAIAQREPDFWHYFFWIEHIQRFALDDAQHRAPFWYYVPVIIAGSLPWLGLLPGALYTGWKNRKHSATVYLLSWTIMPLLFFSVAKGKLPTYILSCFASLAMLMAHYALLAAKNNPLALRINGWINIAFGVTGIIATFVVSPWGPMNTPVWQTFESYKVFCAWSIFSLWAFFGWYTLTNVEKTWSFAALCPLGLALLVGFSIPDRVMEGKHPQFFVEMTQESLQPSRYILTDSVGVAAGLAWSLQRDDIIMYRQTGELKYGLNYPDAKGRFVSGDEFANWLNQHRQEGIITLVLSVDRDEDINSLAIPPADAIDRQERLVLIQYRPK</sequence>
<comment type="function">
    <text evidence="1">Catalyzes the transfer of the L-Ara4N moiety of the glycolipid undecaprenyl phosphate-alpha-L-Ara4N to lipid A. The modified arabinose is attached to lipid A and is required for resistance to polymyxin and cationic antimicrobial peptides.</text>
</comment>
<comment type="catalytic activity">
    <reaction evidence="1">
        <text>4-amino-4-deoxy-alpha-L-arabinopyranosyl di-trans,octa-cis-undecaprenyl phosphate + lipid IVA = lipid IIA + di-trans,octa-cis-undecaprenyl phosphate.</text>
        <dbReference type="EC" id="2.4.2.43"/>
    </reaction>
</comment>
<comment type="pathway">
    <text evidence="1">Lipopolysaccharide metabolism; 4-amino-4-deoxy-beta-L-arabinose-lipid A biosynthesis.</text>
</comment>
<comment type="subcellular location">
    <subcellularLocation>
        <location evidence="1">Cell inner membrane</location>
        <topology evidence="1">Multi-pass membrane protein</topology>
    </subcellularLocation>
</comment>
<comment type="similarity">
    <text evidence="1">Belongs to the glycosyltransferase 83 family.</text>
</comment>
<protein>
    <recommendedName>
        <fullName evidence="1">Undecaprenyl phosphate-alpha-4-amino-4-deoxy-L-arabinose arabinosyl transferase</fullName>
        <ecNumber evidence="1">2.4.2.43</ecNumber>
    </recommendedName>
    <alternativeName>
        <fullName evidence="1">4-amino-4-deoxy-L-arabinose lipid A transferase</fullName>
    </alternativeName>
    <alternativeName>
        <fullName evidence="1">Lipid IV(A) 4-amino-4-deoxy-L-arabinosyltransferase</fullName>
    </alternativeName>
    <alternativeName>
        <fullName evidence="1">Undecaprenyl phosphate-alpha-L-Ara4N transferase</fullName>
    </alternativeName>
</protein>
<feature type="chain" id="PRO_0000380036" description="Undecaprenyl phosphate-alpha-4-amino-4-deoxy-L-arabinose arabinosyl transferase">
    <location>
        <begin position="1"/>
        <end position="550"/>
    </location>
</feature>
<feature type="transmembrane region" description="Helical" evidence="1">
    <location>
        <begin position="7"/>
        <end position="27"/>
    </location>
</feature>
<feature type="transmembrane region" description="Helical" evidence="1">
    <location>
        <begin position="81"/>
        <end position="101"/>
    </location>
</feature>
<feature type="transmembrane region" description="Helical" evidence="1">
    <location>
        <begin position="111"/>
        <end position="133"/>
    </location>
</feature>
<feature type="transmembrane region" description="Helical" evidence="1">
    <location>
        <begin position="137"/>
        <end position="154"/>
    </location>
</feature>
<feature type="transmembrane region" description="Helical" evidence="1">
    <location>
        <begin position="165"/>
        <end position="185"/>
    </location>
</feature>
<feature type="transmembrane region" description="Helical" evidence="1">
    <location>
        <begin position="204"/>
        <end position="224"/>
    </location>
</feature>
<feature type="transmembrane region" description="Helical" evidence="1">
    <location>
        <begin position="255"/>
        <end position="275"/>
    </location>
</feature>
<feature type="transmembrane region" description="Helical" evidence="1">
    <location>
        <begin position="288"/>
        <end position="308"/>
    </location>
</feature>
<feature type="transmembrane region" description="Helical" evidence="1">
    <location>
        <begin position="315"/>
        <end position="335"/>
    </location>
</feature>
<feature type="transmembrane region" description="Helical" evidence="1">
    <location>
        <begin position="346"/>
        <end position="366"/>
    </location>
</feature>
<feature type="transmembrane region" description="Helical" evidence="1">
    <location>
        <begin position="382"/>
        <end position="402"/>
    </location>
</feature>
<feature type="transmembrane region" description="Helical" evidence="1">
    <location>
        <begin position="406"/>
        <end position="426"/>
    </location>
</feature>
<dbReference type="EC" id="2.4.2.43" evidence="1"/>
<dbReference type="EMBL" id="CP001063">
    <property type="protein sequence ID" value="ACD10073.1"/>
    <property type="molecule type" value="Genomic_DNA"/>
</dbReference>
<dbReference type="RefSeq" id="WP_000844032.1">
    <property type="nucleotide sequence ID" value="NC_010658.1"/>
</dbReference>
<dbReference type="SMR" id="B2TW40"/>
<dbReference type="STRING" id="344609.SbBS512_E2633"/>
<dbReference type="CAZy" id="GT83">
    <property type="family name" value="Glycosyltransferase Family 83"/>
</dbReference>
<dbReference type="KEGG" id="sbc:SbBS512_E2633"/>
<dbReference type="HOGENOM" id="CLU_019200_2_1_6"/>
<dbReference type="UniPathway" id="UPA00037"/>
<dbReference type="Proteomes" id="UP000001030">
    <property type="component" value="Chromosome"/>
</dbReference>
<dbReference type="GO" id="GO:0005886">
    <property type="term" value="C:plasma membrane"/>
    <property type="evidence" value="ECO:0007669"/>
    <property type="project" value="UniProtKB-SubCell"/>
</dbReference>
<dbReference type="GO" id="GO:0103015">
    <property type="term" value="F:4-amino-4-deoxy-L-arabinose transferase activity"/>
    <property type="evidence" value="ECO:0007669"/>
    <property type="project" value="UniProtKB-EC"/>
</dbReference>
<dbReference type="GO" id="GO:0000030">
    <property type="term" value="F:mannosyltransferase activity"/>
    <property type="evidence" value="ECO:0007669"/>
    <property type="project" value="InterPro"/>
</dbReference>
<dbReference type="GO" id="GO:0009245">
    <property type="term" value="P:lipid A biosynthetic process"/>
    <property type="evidence" value="ECO:0007669"/>
    <property type="project" value="UniProtKB-UniRule"/>
</dbReference>
<dbReference type="GO" id="GO:0009103">
    <property type="term" value="P:lipopolysaccharide biosynthetic process"/>
    <property type="evidence" value="ECO:0007669"/>
    <property type="project" value="UniProtKB-KW"/>
</dbReference>
<dbReference type="GO" id="GO:0006493">
    <property type="term" value="P:protein O-linked glycosylation"/>
    <property type="evidence" value="ECO:0007669"/>
    <property type="project" value="InterPro"/>
</dbReference>
<dbReference type="GO" id="GO:0010041">
    <property type="term" value="P:response to iron(III) ion"/>
    <property type="evidence" value="ECO:0007669"/>
    <property type="project" value="TreeGrafter"/>
</dbReference>
<dbReference type="HAMAP" id="MF_01165">
    <property type="entry name" value="ArnT_transfer"/>
    <property type="match status" value="1"/>
</dbReference>
<dbReference type="InterPro" id="IPR022839">
    <property type="entry name" value="ArnT_tfrase"/>
</dbReference>
<dbReference type="InterPro" id="IPR003342">
    <property type="entry name" value="Glyco_trans_39/83"/>
</dbReference>
<dbReference type="InterPro" id="IPR050297">
    <property type="entry name" value="LipidA_mod_glycosyltrf_83"/>
</dbReference>
<dbReference type="NCBIfam" id="NF009784">
    <property type="entry name" value="PRK13279.1"/>
    <property type="match status" value="1"/>
</dbReference>
<dbReference type="PANTHER" id="PTHR33908">
    <property type="entry name" value="MANNOSYLTRANSFERASE YKCB-RELATED"/>
    <property type="match status" value="1"/>
</dbReference>
<dbReference type="PANTHER" id="PTHR33908:SF3">
    <property type="entry name" value="UNDECAPRENYL PHOSPHATE-ALPHA-4-AMINO-4-DEOXY-L-ARABINOSE ARABINOSYL TRANSFERASE"/>
    <property type="match status" value="1"/>
</dbReference>
<dbReference type="Pfam" id="PF02366">
    <property type="entry name" value="PMT"/>
    <property type="match status" value="1"/>
</dbReference>